<keyword id="KW-0133">Cell shape</keyword>
<keyword id="KW-0961">Cell wall biogenesis/degradation</keyword>
<keyword id="KW-0413">Isomerase</keyword>
<keyword id="KW-0573">Peptidoglycan synthesis</keyword>
<evidence type="ECO:0000255" key="1">
    <source>
        <dbReference type="HAMAP-Rule" id="MF_00258"/>
    </source>
</evidence>
<dbReference type="EC" id="5.1.1.3" evidence="1"/>
<dbReference type="EMBL" id="CP000419">
    <property type="protein sequence ID" value="ABJ65611.1"/>
    <property type="molecule type" value="Genomic_DNA"/>
</dbReference>
<dbReference type="SMR" id="Q03MG1"/>
<dbReference type="KEGG" id="ste:STER_0302"/>
<dbReference type="HOGENOM" id="CLU_052344_0_2_9"/>
<dbReference type="UniPathway" id="UPA00219"/>
<dbReference type="GO" id="GO:0008881">
    <property type="term" value="F:glutamate racemase activity"/>
    <property type="evidence" value="ECO:0007669"/>
    <property type="project" value="UniProtKB-UniRule"/>
</dbReference>
<dbReference type="GO" id="GO:0071555">
    <property type="term" value="P:cell wall organization"/>
    <property type="evidence" value="ECO:0007669"/>
    <property type="project" value="UniProtKB-KW"/>
</dbReference>
<dbReference type="GO" id="GO:0009252">
    <property type="term" value="P:peptidoglycan biosynthetic process"/>
    <property type="evidence" value="ECO:0007669"/>
    <property type="project" value="UniProtKB-UniRule"/>
</dbReference>
<dbReference type="GO" id="GO:0008360">
    <property type="term" value="P:regulation of cell shape"/>
    <property type="evidence" value="ECO:0007669"/>
    <property type="project" value="UniProtKB-KW"/>
</dbReference>
<dbReference type="FunFam" id="3.40.50.1860:FF:000002">
    <property type="entry name" value="Glutamate racemase"/>
    <property type="match status" value="1"/>
</dbReference>
<dbReference type="Gene3D" id="3.40.50.1860">
    <property type="match status" value="2"/>
</dbReference>
<dbReference type="HAMAP" id="MF_00258">
    <property type="entry name" value="Glu_racemase"/>
    <property type="match status" value="1"/>
</dbReference>
<dbReference type="InterPro" id="IPR015942">
    <property type="entry name" value="Asp/Glu/hydantoin_racemase"/>
</dbReference>
<dbReference type="InterPro" id="IPR001920">
    <property type="entry name" value="Asp/Glu_race"/>
</dbReference>
<dbReference type="InterPro" id="IPR018187">
    <property type="entry name" value="Asp/Glu_racemase_AS_1"/>
</dbReference>
<dbReference type="InterPro" id="IPR033134">
    <property type="entry name" value="Asp/Glu_racemase_AS_2"/>
</dbReference>
<dbReference type="InterPro" id="IPR004391">
    <property type="entry name" value="Glu_race"/>
</dbReference>
<dbReference type="NCBIfam" id="TIGR00067">
    <property type="entry name" value="glut_race"/>
    <property type="match status" value="1"/>
</dbReference>
<dbReference type="NCBIfam" id="NF002035">
    <property type="entry name" value="PRK00865.1-3"/>
    <property type="match status" value="1"/>
</dbReference>
<dbReference type="PANTHER" id="PTHR21198">
    <property type="entry name" value="GLUTAMATE RACEMASE"/>
    <property type="match status" value="1"/>
</dbReference>
<dbReference type="PANTHER" id="PTHR21198:SF2">
    <property type="entry name" value="GLUTAMATE RACEMASE"/>
    <property type="match status" value="1"/>
</dbReference>
<dbReference type="Pfam" id="PF01177">
    <property type="entry name" value="Asp_Glu_race"/>
    <property type="match status" value="1"/>
</dbReference>
<dbReference type="SUPFAM" id="SSF53681">
    <property type="entry name" value="Aspartate/glutamate racemase"/>
    <property type="match status" value="2"/>
</dbReference>
<dbReference type="PROSITE" id="PS00923">
    <property type="entry name" value="ASP_GLU_RACEMASE_1"/>
    <property type="match status" value="1"/>
</dbReference>
<dbReference type="PROSITE" id="PS00924">
    <property type="entry name" value="ASP_GLU_RACEMASE_2"/>
    <property type="match status" value="1"/>
</dbReference>
<protein>
    <recommendedName>
        <fullName evidence="1">Glutamate racemase</fullName>
        <ecNumber evidence="1">5.1.1.3</ecNumber>
    </recommendedName>
</protein>
<accession>Q03MG1</accession>
<organism>
    <name type="scientific">Streptococcus thermophilus (strain ATCC BAA-491 / LMD-9)</name>
    <dbReference type="NCBI Taxonomy" id="322159"/>
    <lineage>
        <taxon>Bacteria</taxon>
        <taxon>Bacillati</taxon>
        <taxon>Bacillota</taxon>
        <taxon>Bacilli</taxon>
        <taxon>Lactobacillales</taxon>
        <taxon>Streptococcaceae</taxon>
        <taxon>Streptococcus</taxon>
    </lineage>
</organism>
<sequence>MDNRPIGFLDSGVGGLTVVRELKRQLPHESIVYIGDSARAPYGPRPAGQIREYTWQLVKFLLTKDVKMIVIACNTATAVVWEEIKESLDIPVLGVVLPGSSAAIKSSRSGQIGVIGTPMTISSNIYEQKIKRLAPQMNVLSLSCPRFAPIVESNEINSSVAKKIVYESMAPLVDRVDTLVLGCTHYPLLRPIIQNVMGLSVKLIDSGAETVRDVSVLLNYFEINRSREVKDKTEEYYTTASVLGFKEIAEQWLGEEVTVQHVDLDKELEND</sequence>
<feature type="chain" id="PRO_1000047633" description="Glutamate racemase">
    <location>
        <begin position="1"/>
        <end position="271"/>
    </location>
</feature>
<feature type="active site" description="Proton donor/acceptor" evidence="1">
    <location>
        <position position="73"/>
    </location>
</feature>
<feature type="active site" description="Proton donor/acceptor" evidence="1">
    <location>
        <position position="183"/>
    </location>
</feature>
<feature type="binding site" evidence="1">
    <location>
        <begin position="10"/>
        <end position="11"/>
    </location>
    <ligand>
        <name>substrate</name>
    </ligand>
</feature>
<feature type="binding site" evidence="1">
    <location>
        <begin position="42"/>
        <end position="43"/>
    </location>
    <ligand>
        <name>substrate</name>
    </ligand>
</feature>
<feature type="binding site" evidence="1">
    <location>
        <begin position="74"/>
        <end position="75"/>
    </location>
    <ligand>
        <name>substrate</name>
    </ligand>
</feature>
<feature type="binding site" evidence="1">
    <location>
        <begin position="184"/>
        <end position="185"/>
    </location>
    <ligand>
        <name>substrate</name>
    </ligand>
</feature>
<comment type="function">
    <text evidence="1">Provides the (R)-glutamate required for cell wall biosynthesis.</text>
</comment>
<comment type="catalytic activity">
    <reaction evidence="1">
        <text>L-glutamate = D-glutamate</text>
        <dbReference type="Rhea" id="RHEA:12813"/>
        <dbReference type="ChEBI" id="CHEBI:29985"/>
        <dbReference type="ChEBI" id="CHEBI:29986"/>
        <dbReference type="EC" id="5.1.1.3"/>
    </reaction>
</comment>
<comment type="pathway">
    <text evidence="1">Cell wall biogenesis; peptidoglycan biosynthesis.</text>
</comment>
<comment type="similarity">
    <text evidence="1">Belongs to the aspartate/glutamate racemases family.</text>
</comment>
<gene>
    <name evidence="1" type="primary">murI</name>
    <name type="ordered locus">STER_0302</name>
</gene>
<reference key="1">
    <citation type="journal article" date="2006" name="Proc. Natl. Acad. Sci. U.S.A.">
        <title>Comparative genomics of the lactic acid bacteria.</title>
        <authorList>
            <person name="Makarova K.S."/>
            <person name="Slesarev A."/>
            <person name="Wolf Y.I."/>
            <person name="Sorokin A."/>
            <person name="Mirkin B."/>
            <person name="Koonin E.V."/>
            <person name="Pavlov A."/>
            <person name="Pavlova N."/>
            <person name="Karamychev V."/>
            <person name="Polouchine N."/>
            <person name="Shakhova V."/>
            <person name="Grigoriev I."/>
            <person name="Lou Y."/>
            <person name="Rohksar D."/>
            <person name="Lucas S."/>
            <person name="Huang K."/>
            <person name="Goodstein D.M."/>
            <person name="Hawkins T."/>
            <person name="Plengvidhya V."/>
            <person name="Welker D."/>
            <person name="Hughes J."/>
            <person name="Goh Y."/>
            <person name="Benson A."/>
            <person name="Baldwin K."/>
            <person name="Lee J.-H."/>
            <person name="Diaz-Muniz I."/>
            <person name="Dosti B."/>
            <person name="Smeianov V."/>
            <person name="Wechter W."/>
            <person name="Barabote R."/>
            <person name="Lorca G."/>
            <person name="Altermann E."/>
            <person name="Barrangou R."/>
            <person name="Ganesan B."/>
            <person name="Xie Y."/>
            <person name="Rawsthorne H."/>
            <person name="Tamir D."/>
            <person name="Parker C."/>
            <person name="Breidt F."/>
            <person name="Broadbent J.R."/>
            <person name="Hutkins R."/>
            <person name="O'Sullivan D."/>
            <person name="Steele J."/>
            <person name="Unlu G."/>
            <person name="Saier M.H. Jr."/>
            <person name="Klaenhammer T."/>
            <person name="Richardson P."/>
            <person name="Kozyavkin S."/>
            <person name="Weimer B.C."/>
            <person name="Mills D.A."/>
        </authorList>
    </citation>
    <scope>NUCLEOTIDE SEQUENCE [LARGE SCALE GENOMIC DNA]</scope>
    <source>
        <strain>ATCC BAA-491 / LMD-9</strain>
    </source>
</reference>
<proteinExistence type="inferred from homology"/>
<name>MURI_STRTD</name>